<evidence type="ECO:0000255" key="1"/>
<evidence type="ECO:0000256" key="2">
    <source>
        <dbReference type="SAM" id="MobiDB-lite"/>
    </source>
</evidence>
<evidence type="ECO:0000305" key="3"/>
<reference key="1">
    <citation type="journal article" date="2013" name="Nature">
        <title>The zebrafish reference genome sequence and its relationship to the human genome.</title>
        <authorList>
            <person name="Howe K."/>
            <person name="Clark M.D."/>
            <person name="Torroja C.F."/>
            <person name="Torrance J."/>
            <person name="Berthelot C."/>
            <person name="Muffato M."/>
            <person name="Collins J.E."/>
            <person name="Humphray S."/>
            <person name="McLaren K."/>
            <person name="Matthews L."/>
            <person name="McLaren S."/>
            <person name="Sealy I."/>
            <person name="Caccamo M."/>
            <person name="Churcher C."/>
            <person name="Scott C."/>
            <person name="Barrett J.C."/>
            <person name="Koch R."/>
            <person name="Rauch G.J."/>
            <person name="White S."/>
            <person name="Chow W."/>
            <person name="Kilian B."/>
            <person name="Quintais L.T."/>
            <person name="Guerra-Assuncao J.A."/>
            <person name="Zhou Y."/>
            <person name="Gu Y."/>
            <person name="Yen J."/>
            <person name="Vogel J.H."/>
            <person name="Eyre T."/>
            <person name="Redmond S."/>
            <person name="Banerjee R."/>
            <person name="Chi J."/>
            <person name="Fu B."/>
            <person name="Langley E."/>
            <person name="Maguire S.F."/>
            <person name="Laird G.K."/>
            <person name="Lloyd D."/>
            <person name="Kenyon E."/>
            <person name="Donaldson S."/>
            <person name="Sehra H."/>
            <person name="Almeida-King J."/>
            <person name="Loveland J."/>
            <person name="Trevanion S."/>
            <person name="Jones M."/>
            <person name="Quail M."/>
            <person name="Willey D."/>
            <person name="Hunt A."/>
            <person name="Burton J."/>
            <person name="Sims S."/>
            <person name="McLay K."/>
            <person name="Plumb B."/>
            <person name="Davis J."/>
            <person name="Clee C."/>
            <person name="Oliver K."/>
            <person name="Clark R."/>
            <person name="Riddle C."/>
            <person name="Elliot D."/>
            <person name="Threadgold G."/>
            <person name="Harden G."/>
            <person name="Ware D."/>
            <person name="Begum S."/>
            <person name="Mortimore B."/>
            <person name="Kerry G."/>
            <person name="Heath P."/>
            <person name="Phillimore B."/>
            <person name="Tracey A."/>
            <person name="Corby N."/>
            <person name="Dunn M."/>
            <person name="Johnson C."/>
            <person name="Wood J."/>
            <person name="Clark S."/>
            <person name="Pelan S."/>
            <person name="Griffiths G."/>
            <person name="Smith M."/>
            <person name="Glithero R."/>
            <person name="Howden P."/>
            <person name="Barker N."/>
            <person name="Lloyd C."/>
            <person name="Stevens C."/>
            <person name="Harley J."/>
            <person name="Holt K."/>
            <person name="Panagiotidis G."/>
            <person name="Lovell J."/>
            <person name="Beasley H."/>
            <person name="Henderson C."/>
            <person name="Gordon D."/>
            <person name="Auger K."/>
            <person name="Wright D."/>
            <person name="Collins J."/>
            <person name="Raisen C."/>
            <person name="Dyer L."/>
            <person name="Leung K."/>
            <person name="Robertson L."/>
            <person name="Ambridge K."/>
            <person name="Leongamornlert D."/>
            <person name="McGuire S."/>
            <person name="Gilderthorp R."/>
            <person name="Griffiths C."/>
            <person name="Manthravadi D."/>
            <person name="Nichol S."/>
            <person name="Barker G."/>
            <person name="Whitehead S."/>
            <person name="Kay M."/>
            <person name="Brown J."/>
            <person name="Murnane C."/>
            <person name="Gray E."/>
            <person name="Humphries M."/>
            <person name="Sycamore N."/>
            <person name="Barker D."/>
            <person name="Saunders D."/>
            <person name="Wallis J."/>
            <person name="Babbage A."/>
            <person name="Hammond S."/>
            <person name="Mashreghi-Mohammadi M."/>
            <person name="Barr L."/>
            <person name="Martin S."/>
            <person name="Wray P."/>
            <person name="Ellington A."/>
            <person name="Matthews N."/>
            <person name="Ellwood M."/>
            <person name="Woodmansey R."/>
            <person name="Clark G."/>
            <person name="Cooper J."/>
            <person name="Tromans A."/>
            <person name="Grafham D."/>
            <person name="Skuce C."/>
            <person name="Pandian R."/>
            <person name="Andrews R."/>
            <person name="Harrison E."/>
            <person name="Kimberley A."/>
            <person name="Garnett J."/>
            <person name="Fosker N."/>
            <person name="Hall R."/>
            <person name="Garner P."/>
            <person name="Kelly D."/>
            <person name="Bird C."/>
            <person name="Palmer S."/>
            <person name="Gehring I."/>
            <person name="Berger A."/>
            <person name="Dooley C.M."/>
            <person name="Ersan-Urun Z."/>
            <person name="Eser C."/>
            <person name="Geiger H."/>
            <person name="Geisler M."/>
            <person name="Karotki L."/>
            <person name="Kirn A."/>
            <person name="Konantz J."/>
            <person name="Konantz M."/>
            <person name="Oberlander M."/>
            <person name="Rudolph-Geiger S."/>
            <person name="Teucke M."/>
            <person name="Lanz C."/>
            <person name="Raddatz G."/>
            <person name="Osoegawa K."/>
            <person name="Zhu B."/>
            <person name="Rapp A."/>
            <person name="Widaa S."/>
            <person name="Langford C."/>
            <person name="Yang F."/>
            <person name="Schuster S.C."/>
            <person name="Carter N.P."/>
            <person name="Harrow J."/>
            <person name="Ning Z."/>
            <person name="Herrero J."/>
            <person name="Searle S.M."/>
            <person name="Enright A."/>
            <person name="Geisler R."/>
            <person name="Plasterk R.H."/>
            <person name="Lee C."/>
            <person name="Westerfield M."/>
            <person name="de Jong P.J."/>
            <person name="Zon L.I."/>
            <person name="Postlethwait J.H."/>
            <person name="Nusslein-Volhard C."/>
            <person name="Hubbard T.J."/>
            <person name="Roest Crollius H."/>
            <person name="Rogers J."/>
            <person name="Stemple D.L."/>
        </authorList>
    </citation>
    <scope>NUCLEOTIDE SEQUENCE [LARGE SCALE GENOMIC DNA]</scope>
    <source>
        <strain>Tuebingen</strain>
    </source>
</reference>
<sequence>MWQSVGLTVLVIVATLICVLLFMLFGWYVVWQLFLSKFKFLRELVGDTGSPQAETEPSESESERSSPPTPRQRPKTARQRVIPPDSTT</sequence>
<protein>
    <recommendedName>
        <fullName>Small integral membrane protein 13</fullName>
    </recommendedName>
</protein>
<accession>B8JJV5</accession>
<comment type="subcellular location">
    <subcellularLocation>
        <location evidence="3">Membrane</location>
        <topology evidence="3">Single-pass membrane protein</topology>
    </subcellularLocation>
</comment>
<comment type="similarity">
    <text evidence="3">Belongs to the SMIM13 family.</text>
</comment>
<dbReference type="EMBL" id="CU915805">
    <property type="status" value="NOT_ANNOTATED_CDS"/>
    <property type="molecule type" value="Genomic_DNA"/>
</dbReference>
<dbReference type="EMBL" id="CT030005">
    <property type="protein sequence ID" value="CAX12824.1"/>
    <property type="molecule type" value="Genomic_DNA"/>
</dbReference>
<dbReference type="RefSeq" id="NP_001129051.1">
    <property type="nucleotide sequence ID" value="NM_001135579.2"/>
</dbReference>
<dbReference type="SMR" id="B8JJV5"/>
<dbReference type="FunCoup" id="B8JJV5">
    <property type="interactions" value="322"/>
</dbReference>
<dbReference type="STRING" id="7955.ENSDARP00000108633"/>
<dbReference type="PaxDb" id="7955-ENSDARP00000108633"/>
<dbReference type="Ensembl" id="ENSDART00000161738">
    <property type="protein sequence ID" value="ENSDARP00000140977"/>
    <property type="gene ID" value="ENSDARG00000089204"/>
</dbReference>
<dbReference type="Ensembl" id="ENSDART00000183656">
    <property type="protein sequence ID" value="ENSDARP00000148111"/>
    <property type="gene ID" value="ENSDARG00000113880"/>
</dbReference>
<dbReference type="GeneID" id="100190889"/>
<dbReference type="KEGG" id="dre:100190889"/>
<dbReference type="AGR" id="ZFIN:ZDB-GENE-141212-279"/>
<dbReference type="CTD" id="221710"/>
<dbReference type="ZFIN" id="ZDB-GENE-141212-279">
    <property type="gene designation" value="smim13"/>
</dbReference>
<dbReference type="eggNOG" id="ENOG502S5IU">
    <property type="taxonomic scope" value="Eukaryota"/>
</dbReference>
<dbReference type="HOGENOM" id="CLU_190096_0_0_1"/>
<dbReference type="InParanoid" id="B8JJV5"/>
<dbReference type="OMA" id="ACVLLFM"/>
<dbReference type="OrthoDB" id="25586at2759"/>
<dbReference type="PhylomeDB" id="B8JJV5"/>
<dbReference type="PRO" id="PR:B8JJV5"/>
<dbReference type="Proteomes" id="UP000000437">
    <property type="component" value="Alternate scaffold 19"/>
</dbReference>
<dbReference type="Proteomes" id="UP000000437">
    <property type="component" value="Chromosome 19"/>
</dbReference>
<dbReference type="Bgee" id="ENSDARG00000089204">
    <property type="expression patterns" value="Expressed in muscle tissue and 26 other cell types or tissues"/>
</dbReference>
<dbReference type="ExpressionAtlas" id="B8JJV5">
    <property type="expression patterns" value="baseline and differential"/>
</dbReference>
<dbReference type="GO" id="GO:0016020">
    <property type="term" value="C:membrane"/>
    <property type="evidence" value="ECO:0007669"/>
    <property type="project" value="UniProtKB-SubCell"/>
</dbReference>
<dbReference type="InterPro" id="IPR031851">
    <property type="entry name" value="DUF4750"/>
</dbReference>
<dbReference type="PANTHER" id="PTHR36877">
    <property type="entry name" value="SMALL INTEGRAL MEMBRANE PROTEIN 13"/>
    <property type="match status" value="1"/>
</dbReference>
<dbReference type="PANTHER" id="PTHR36877:SF1">
    <property type="entry name" value="SMALL INTEGRAL MEMBRANE PROTEIN 13"/>
    <property type="match status" value="1"/>
</dbReference>
<dbReference type="Pfam" id="PF15938">
    <property type="entry name" value="DUF4750"/>
    <property type="match status" value="1"/>
</dbReference>
<gene>
    <name type="primary">smim13</name>
    <name type="ORF">si:dkey-206d17.5</name>
</gene>
<name>SIM13_DANRE</name>
<feature type="chain" id="PRO_0000414063" description="Small integral membrane protein 13">
    <location>
        <begin position="1"/>
        <end position="88"/>
    </location>
</feature>
<feature type="transmembrane region" description="Helical" evidence="1">
    <location>
        <begin position="10"/>
        <end position="30"/>
    </location>
</feature>
<feature type="region of interest" description="Disordered" evidence="2">
    <location>
        <begin position="48"/>
        <end position="88"/>
    </location>
</feature>
<keyword id="KW-0472">Membrane</keyword>
<keyword id="KW-1185">Reference proteome</keyword>
<keyword id="KW-0812">Transmembrane</keyword>
<keyword id="KW-1133">Transmembrane helix</keyword>
<organism>
    <name type="scientific">Danio rerio</name>
    <name type="common">Zebrafish</name>
    <name type="synonym">Brachydanio rerio</name>
    <dbReference type="NCBI Taxonomy" id="7955"/>
    <lineage>
        <taxon>Eukaryota</taxon>
        <taxon>Metazoa</taxon>
        <taxon>Chordata</taxon>
        <taxon>Craniata</taxon>
        <taxon>Vertebrata</taxon>
        <taxon>Euteleostomi</taxon>
        <taxon>Actinopterygii</taxon>
        <taxon>Neopterygii</taxon>
        <taxon>Teleostei</taxon>
        <taxon>Ostariophysi</taxon>
        <taxon>Cypriniformes</taxon>
        <taxon>Danionidae</taxon>
        <taxon>Danioninae</taxon>
        <taxon>Danio</taxon>
    </lineage>
</organism>
<proteinExistence type="inferred from homology"/>